<reference key="1">
    <citation type="journal article" date="1985" name="Mol. Gen. Genet.">
        <title>Structural and functional homology between the alpha and beta subunits of the nitrogenase MoFe protein as revealed by sequencing the Rhizobium japonicum nifK gene.</title>
        <authorList>
            <person name="Thoeny B."/>
            <person name="Kaluza K."/>
            <person name="Hennecke H."/>
        </authorList>
    </citation>
    <scope>NUCLEOTIDE SEQUENCE [GENOMIC DNA]</scope>
    <source>
        <strain>JCM 10833 / BCRC 13528 / IAM 13628 / NBRC 14792 / USDA 110</strain>
    </source>
</reference>
<reference key="2">
    <citation type="journal article" date="2001" name="J. Bacteriol.">
        <title>Potential symbiosis-specific genes uncovered by sequencing a 410-kb DNA region of the Bradyrhizobium japonicum chromosome.</title>
        <authorList>
            <person name="Goettfert M."/>
            <person name="Roethlisberger S."/>
            <person name="Kuendig C."/>
            <person name="Beck C."/>
            <person name="Marty R."/>
            <person name="Hennecke H."/>
        </authorList>
    </citation>
    <scope>NUCLEOTIDE SEQUENCE [GENOMIC DNA]</scope>
    <source>
        <strain>USDA 110spc4</strain>
    </source>
</reference>
<reference key="3">
    <citation type="journal article" date="2002" name="DNA Res.">
        <title>Complete genomic sequence of nitrogen-fixing symbiotic bacterium Bradyrhizobium japonicum USDA110.</title>
        <authorList>
            <person name="Kaneko T."/>
            <person name="Nakamura Y."/>
            <person name="Sato S."/>
            <person name="Minamisawa K."/>
            <person name="Uchiumi T."/>
            <person name="Sasamoto S."/>
            <person name="Watanabe A."/>
            <person name="Idesawa K."/>
            <person name="Iriguchi M."/>
            <person name="Kawashima K."/>
            <person name="Kohara M."/>
            <person name="Matsumoto M."/>
            <person name="Shimpo S."/>
            <person name="Tsuruoka H."/>
            <person name="Wada T."/>
            <person name="Yamada M."/>
            <person name="Tabata S."/>
        </authorList>
    </citation>
    <scope>NUCLEOTIDE SEQUENCE [LARGE SCALE GENOMIC DNA]</scope>
    <source>
        <strain>JCM 10833 / BCRC 13528 / IAM 13628 / NBRC 14792 / USDA 110</strain>
    </source>
</reference>
<reference key="4">
    <citation type="journal article" date="1984" name="Mol. Gen. Genet.">
        <title>Fine structure analysis of the nifDK operon encoding the alpha and beta subunits of dinitrogenase from Rhizobium japonicum.</title>
        <authorList>
            <person name="Kaluza K."/>
            <person name="Hennecke H."/>
        </authorList>
    </citation>
    <scope>NUCLEOTIDE SEQUENCE [GENOMIC DNA] OF 1-44</scope>
    <source>
        <strain>JCM 10833 / BCRC 13528 / IAM 13628 / NBRC 14792 / USDA 110</strain>
    </source>
</reference>
<evidence type="ECO:0000250" key="1"/>
<evidence type="ECO:0000305" key="2"/>
<dbReference type="EC" id="1.18.6.1"/>
<dbReference type="EMBL" id="M64591">
    <property type="protein sequence ID" value="AAA26326.1"/>
    <property type="molecule type" value="Genomic_DNA"/>
</dbReference>
<dbReference type="EMBL" id="AH010242">
    <property type="protein sequence ID" value="AAG60730.1"/>
    <property type="molecule type" value="Genomic_DNA"/>
</dbReference>
<dbReference type="EMBL" id="BA000040">
    <property type="protein sequence ID" value="BAC47009.1"/>
    <property type="molecule type" value="Genomic_DNA"/>
</dbReference>
<dbReference type="EMBL" id="X01045">
    <property type="protein sequence ID" value="CAA25524.1"/>
    <property type="molecule type" value="Genomic_DNA"/>
</dbReference>
<dbReference type="PIR" id="S09548">
    <property type="entry name" value="S09548"/>
</dbReference>
<dbReference type="RefSeq" id="NP_768384.1">
    <property type="nucleotide sequence ID" value="NC_004463.1"/>
</dbReference>
<dbReference type="RefSeq" id="WP_011084553.1">
    <property type="nucleotide sequence ID" value="NZ_CP011360.1"/>
</dbReference>
<dbReference type="SMR" id="P20621"/>
<dbReference type="STRING" id="224911.AAV28_05650"/>
<dbReference type="EnsemblBacteria" id="BAC47009">
    <property type="protein sequence ID" value="BAC47009"/>
    <property type="gene ID" value="BAC47009"/>
</dbReference>
<dbReference type="GeneID" id="92969973"/>
<dbReference type="KEGG" id="bja:blr1744"/>
<dbReference type="PATRIC" id="fig|224911.44.peg.1209"/>
<dbReference type="eggNOG" id="COG2710">
    <property type="taxonomic scope" value="Bacteria"/>
</dbReference>
<dbReference type="HOGENOM" id="CLU_025876_2_0_5"/>
<dbReference type="InParanoid" id="P20621"/>
<dbReference type="OrthoDB" id="9800746at2"/>
<dbReference type="PhylomeDB" id="P20621"/>
<dbReference type="Proteomes" id="UP000002526">
    <property type="component" value="Chromosome"/>
</dbReference>
<dbReference type="GO" id="GO:0016612">
    <property type="term" value="C:molybdenum-iron nitrogenase complex"/>
    <property type="evidence" value="ECO:0007669"/>
    <property type="project" value="InterPro"/>
</dbReference>
<dbReference type="GO" id="GO:0005524">
    <property type="term" value="F:ATP binding"/>
    <property type="evidence" value="ECO:0007669"/>
    <property type="project" value="UniProtKB-KW"/>
</dbReference>
<dbReference type="GO" id="GO:0051536">
    <property type="term" value="F:iron-sulfur cluster binding"/>
    <property type="evidence" value="ECO:0007669"/>
    <property type="project" value="UniProtKB-KW"/>
</dbReference>
<dbReference type="GO" id="GO:0046872">
    <property type="term" value="F:metal ion binding"/>
    <property type="evidence" value="ECO:0007669"/>
    <property type="project" value="UniProtKB-KW"/>
</dbReference>
<dbReference type="GO" id="GO:0016163">
    <property type="term" value="F:nitrogenase activity"/>
    <property type="evidence" value="ECO:0007669"/>
    <property type="project" value="UniProtKB-EC"/>
</dbReference>
<dbReference type="GO" id="GO:0009399">
    <property type="term" value="P:nitrogen fixation"/>
    <property type="evidence" value="ECO:0007669"/>
    <property type="project" value="UniProtKB-KW"/>
</dbReference>
<dbReference type="CDD" id="cd01974">
    <property type="entry name" value="Nitrogenase_MoFe_beta"/>
    <property type="match status" value="1"/>
</dbReference>
<dbReference type="Gene3D" id="3.40.50.1980">
    <property type="entry name" value="Nitrogenase molybdenum iron protein domain"/>
    <property type="match status" value="3"/>
</dbReference>
<dbReference type="Gene3D" id="1.20.89.10">
    <property type="entry name" value="Nitrogenase Molybdenum-iron Protein, subunit B, domain 4"/>
    <property type="match status" value="1"/>
</dbReference>
<dbReference type="InterPro" id="IPR050152">
    <property type="entry name" value="ChlB/BchB/BchZ"/>
</dbReference>
<dbReference type="InterPro" id="IPR000510">
    <property type="entry name" value="Nase/OxRdtase_comp1"/>
</dbReference>
<dbReference type="InterPro" id="IPR000318">
    <property type="entry name" value="Nase_comp1_CS"/>
</dbReference>
<dbReference type="InterPro" id="IPR005976">
    <property type="entry name" value="Nase_Mo-Fe_CF_bsu"/>
</dbReference>
<dbReference type="InterPro" id="IPR024564">
    <property type="entry name" value="Nase_Mo-Fe_CF_bsu_N"/>
</dbReference>
<dbReference type="NCBIfam" id="TIGR01286">
    <property type="entry name" value="nifK"/>
    <property type="match status" value="1"/>
</dbReference>
<dbReference type="PANTHER" id="PTHR33712">
    <property type="entry name" value="LIGHT-INDEPENDENT PROTOCHLOROPHYLLIDE REDUCTASE SUBUNIT B"/>
    <property type="match status" value="1"/>
</dbReference>
<dbReference type="PANTHER" id="PTHR33712:SF7">
    <property type="entry name" value="LIGHT-INDEPENDENT PROTOCHLOROPHYLLIDE REDUCTASE SUBUNIT B"/>
    <property type="match status" value="1"/>
</dbReference>
<dbReference type="Pfam" id="PF11844">
    <property type="entry name" value="DUF3364"/>
    <property type="match status" value="1"/>
</dbReference>
<dbReference type="Pfam" id="PF00148">
    <property type="entry name" value="Oxidored_nitro"/>
    <property type="match status" value="1"/>
</dbReference>
<dbReference type="SUPFAM" id="SSF53807">
    <property type="entry name" value="Helical backbone' metal receptor"/>
    <property type="match status" value="1"/>
</dbReference>
<dbReference type="PROSITE" id="PS00699">
    <property type="entry name" value="NITROGENASE_1_1"/>
    <property type="match status" value="1"/>
</dbReference>
<dbReference type="PROSITE" id="PS00090">
    <property type="entry name" value="NITROGENASE_1_2"/>
    <property type="match status" value="1"/>
</dbReference>
<name>NIFK_BRADU</name>
<comment type="function">
    <text>This molybdenum-iron protein is part of the nitrogenase complex that catalyzes the key enzymatic reactions in nitrogen fixation.</text>
</comment>
<comment type="catalytic activity">
    <reaction>
        <text>N2 + 8 reduced [2Fe-2S]-[ferredoxin] + 16 ATP + 16 H2O = H2 + 8 oxidized [2Fe-2S]-[ferredoxin] + 2 NH4(+) + 16 ADP + 16 phosphate + 6 H(+)</text>
        <dbReference type="Rhea" id="RHEA:21448"/>
        <dbReference type="Rhea" id="RHEA-COMP:10000"/>
        <dbReference type="Rhea" id="RHEA-COMP:10001"/>
        <dbReference type="ChEBI" id="CHEBI:15377"/>
        <dbReference type="ChEBI" id="CHEBI:15378"/>
        <dbReference type="ChEBI" id="CHEBI:17997"/>
        <dbReference type="ChEBI" id="CHEBI:18276"/>
        <dbReference type="ChEBI" id="CHEBI:28938"/>
        <dbReference type="ChEBI" id="CHEBI:30616"/>
        <dbReference type="ChEBI" id="CHEBI:33737"/>
        <dbReference type="ChEBI" id="CHEBI:33738"/>
        <dbReference type="ChEBI" id="CHEBI:43474"/>
        <dbReference type="ChEBI" id="CHEBI:456216"/>
        <dbReference type="EC" id="1.18.6.1"/>
    </reaction>
</comment>
<comment type="cofactor">
    <cofactor evidence="1">
        <name>[8Fe-7S] cluster</name>
        <dbReference type="ChEBI" id="CHEBI:21143"/>
    </cofactor>
    <text evidence="1">Binds 1 [8Fe-7S] cluster per heterodimer.</text>
</comment>
<comment type="subunit">
    <text>Tetramer of two alpha and two beta chains. Forms complex with the iron protein (nitrogenase component 2).</text>
</comment>
<comment type="miscellaneous">
    <text>Ala-187 is present instead of the usual Ser that would serve as a ligand for the 8Fe-7S cluster in the oxidized state.</text>
</comment>
<comment type="similarity">
    <text evidence="2">Belongs to the NifD/NifK/NifE/NifN family.</text>
</comment>
<accession>P20621</accession>
<accession>Q9ANN4</accession>
<organism>
    <name type="scientific">Bradyrhizobium diazoefficiens (strain JCM 10833 / BCRC 13528 / IAM 13628 / NBRC 14792 / USDA 110)</name>
    <dbReference type="NCBI Taxonomy" id="224911"/>
    <lineage>
        <taxon>Bacteria</taxon>
        <taxon>Pseudomonadati</taxon>
        <taxon>Pseudomonadota</taxon>
        <taxon>Alphaproteobacteria</taxon>
        <taxon>Hyphomicrobiales</taxon>
        <taxon>Nitrobacteraceae</taxon>
        <taxon>Bradyrhizobium</taxon>
    </lineage>
</organism>
<protein>
    <recommendedName>
        <fullName>Nitrogenase molybdenum-iron protein beta chain</fullName>
        <ecNumber>1.18.6.1</ecNumber>
    </recommendedName>
    <alternativeName>
        <fullName>Dinitrogenase</fullName>
    </alternativeName>
    <alternativeName>
        <fullName>Nitrogenase component I</fullName>
    </alternativeName>
</protein>
<proteinExistence type="inferred from homology"/>
<keyword id="KW-0067">ATP-binding</keyword>
<keyword id="KW-0408">Iron</keyword>
<keyword id="KW-0411">Iron-sulfur</keyword>
<keyword id="KW-0479">Metal-binding</keyword>
<keyword id="KW-0535">Nitrogen fixation</keyword>
<keyword id="KW-0547">Nucleotide-binding</keyword>
<keyword id="KW-0560">Oxidoreductase</keyword>
<keyword id="KW-1185">Reference proteome</keyword>
<feature type="chain" id="PRO_0000153094" description="Nitrogenase molybdenum-iron protein beta chain">
    <location>
        <begin position="1"/>
        <end position="518"/>
    </location>
</feature>
<feature type="binding site" evidence="1">
    <location>
        <position position="69"/>
    </location>
    <ligand>
        <name>[8Fe-7S] cluster</name>
        <dbReference type="ChEBI" id="CHEBI:21143"/>
        <note>ligand shared with alpha chain</note>
    </ligand>
</feature>
<feature type="binding site" evidence="1">
    <location>
        <position position="94"/>
    </location>
    <ligand>
        <name>[8Fe-7S] cluster</name>
        <dbReference type="ChEBI" id="CHEBI:21143"/>
        <note>ligand shared with alpha chain</note>
    </ligand>
</feature>
<feature type="binding site" evidence="1">
    <location>
        <position position="152"/>
    </location>
    <ligand>
        <name>[8Fe-7S] cluster</name>
        <dbReference type="ChEBI" id="CHEBI:21143"/>
        <note>ligand shared with alpha chain</note>
    </ligand>
</feature>
<feature type="sequence conflict" description="In Ref. 1; AAA26326." evidence="2" ref="1">
    <original>S</original>
    <variation>F</variation>
    <location>
        <position position="477"/>
    </location>
</feature>
<gene>
    <name type="primary">nifK</name>
    <name type="ordered locus">blr1744</name>
</gene>
<sequence>MPQSAEHVLDHVELFRGPEYQQMLAKKKIFENPRDPAEVERIKEWTKTAEYREKNFAREALAVNPAKACQPLGAVFASVGFERTLPFVHGSQGCVAYYRSHLSRHFKEPSSCVSSSMTEDAAVFGGLNNMTDGLANSYKMYKPKMIAVSTTCMAEVIGDDLNAFIKTSKEKGSVPADFDVPFAHTPAFVGSHVTGYDNALKGILEHFWDGKAGTAPKLERKPNGAINIIGGFDGYTVGNLREIKRILELMGIQHTVLADNSEVFDTPTDGEFRMYDGGTTLKDAANAIHAKATISMQQWCTEKTLSFAAEHGQDVLSFNYPVGLSATDDFIVALSRISGKEIPEQLARERGRLVDAIADSSAHVHGKKFAIYGDPDLCYGLAAFLLELGAEPTHVLSTNGNKAWQEKMQALLASSPFGQGCQVYPGRDLWHMRSLLFTEPVDFLIGNTYGKYLERDTATPLIRIGFPIFDRHHHHRSPIWGYQGGLNVLVKILDKIFDEIDNKTNILGKTDYSFDIIR</sequence>